<evidence type="ECO:0000255" key="1">
    <source>
        <dbReference type="HAMAP-Rule" id="MF_00101"/>
    </source>
</evidence>
<organism>
    <name type="scientific">Exiguobacterium sibiricum (strain DSM 17290 / CCUG 55495 / CIP 109462 / JCM 13490 / 255-15)</name>
    <dbReference type="NCBI Taxonomy" id="262543"/>
    <lineage>
        <taxon>Bacteria</taxon>
        <taxon>Bacillati</taxon>
        <taxon>Bacillota</taxon>
        <taxon>Bacilli</taxon>
        <taxon>Bacillales</taxon>
        <taxon>Bacillales Family XII. Incertae Sedis</taxon>
        <taxon>Exiguobacterium</taxon>
    </lineage>
</organism>
<keyword id="KW-0963">Cytoplasm</keyword>
<keyword id="KW-0275">Fatty acid biosynthesis</keyword>
<keyword id="KW-0276">Fatty acid metabolism</keyword>
<keyword id="KW-0444">Lipid biosynthesis</keyword>
<keyword id="KW-0443">Lipid metabolism</keyword>
<keyword id="KW-0460">Magnesium</keyword>
<keyword id="KW-0479">Metal-binding</keyword>
<keyword id="KW-1185">Reference proteome</keyword>
<keyword id="KW-0808">Transferase</keyword>
<protein>
    <recommendedName>
        <fullName evidence="1">Holo-[acyl-carrier-protein] synthase</fullName>
        <shortName evidence="1">Holo-ACP synthase</shortName>
        <ecNumber evidence="1">2.7.8.7</ecNumber>
    </recommendedName>
    <alternativeName>
        <fullName evidence="1">4'-phosphopantetheinyl transferase AcpS</fullName>
    </alternativeName>
</protein>
<dbReference type="EC" id="2.7.8.7" evidence="1"/>
<dbReference type="EMBL" id="CP001022">
    <property type="protein sequence ID" value="ACB62256.1"/>
    <property type="molecule type" value="Genomic_DNA"/>
</dbReference>
<dbReference type="RefSeq" id="WP_012371672.1">
    <property type="nucleotide sequence ID" value="NC_010556.1"/>
</dbReference>
<dbReference type="SMR" id="B1YF32"/>
<dbReference type="STRING" id="262543.Exig_2810"/>
<dbReference type="KEGG" id="esi:Exig_2810"/>
<dbReference type="eggNOG" id="COG0736">
    <property type="taxonomic scope" value="Bacteria"/>
</dbReference>
<dbReference type="HOGENOM" id="CLU_089696_1_2_9"/>
<dbReference type="OrthoDB" id="517356at2"/>
<dbReference type="Proteomes" id="UP000001681">
    <property type="component" value="Chromosome"/>
</dbReference>
<dbReference type="GO" id="GO:0005737">
    <property type="term" value="C:cytoplasm"/>
    <property type="evidence" value="ECO:0007669"/>
    <property type="project" value="UniProtKB-SubCell"/>
</dbReference>
<dbReference type="GO" id="GO:0008897">
    <property type="term" value="F:holo-[acyl-carrier-protein] synthase activity"/>
    <property type="evidence" value="ECO:0007669"/>
    <property type="project" value="UniProtKB-UniRule"/>
</dbReference>
<dbReference type="GO" id="GO:0000287">
    <property type="term" value="F:magnesium ion binding"/>
    <property type="evidence" value="ECO:0007669"/>
    <property type="project" value="UniProtKB-UniRule"/>
</dbReference>
<dbReference type="GO" id="GO:0006633">
    <property type="term" value="P:fatty acid biosynthetic process"/>
    <property type="evidence" value="ECO:0007669"/>
    <property type="project" value="UniProtKB-UniRule"/>
</dbReference>
<dbReference type="Gene3D" id="3.90.470.20">
    <property type="entry name" value="4'-phosphopantetheinyl transferase domain"/>
    <property type="match status" value="1"/>
</dbReference>
<dbReference type="HAMAP" id="MF_00101">
    <property type="entry name" value="AcpS"/>
    <property type="match status" value="1"/>
</dbReference>
<dbReference type="InterPro" id="IPR008278">
    <property type="entry name" value="4-PPantetheinyl_Trfase_dom"/>
</dbReference>
<dbReference type="InterPro" id="IPR037143">
    <property type="entry name" value="4-PPantetheinyl_Trfase_dom_sf"/>
</dbReference>
<dbReference type="InterPro" id="IPR002582">
    <property type="entry name" value="ACPS"/>
</dbReference>
<dbReference type="InterPro" id="IPR004568">
    <property type="entry name" value="Ppantetheine-prot_Trfase_dom"/>
</dbReference>
<dbReference type="NCBIfam" id="TIGR00516">
    <property type="entry name" value="acpS"/>
    <property type="match status" value="1"/>
</dbReference>
<dbReference type="NCBIfam" id="TIGR00556">
    <property type="entry name" value="pantethn_trn"/>
    <property type="match status" value="1"/>
</dbReference>
<dbReference type="Pfam" id="PF01648">
    <property type="entry name" value="ACPS"/>
    <property type="match status" value="1"/>
</dbReference>
<dbReference type="SUPFAM" id="SSF56214">
    <property type="entry name" value="4'-phosphopantetheinyl transferase"/>
    <property type="match status" value="1"/>
</dbReference>
<comment type="function">
    <text evidence="1">Transfers the 4'-phosphopantetheine moiety from coenzyme A to a Ser of acyl-carrier-protein.</text>
</comment>
<comment type="catalytic activity">
    <reaction evidence="1">
        <text>apo-[ACP] + CoA = holo-[ACP] + adenosine 3',5'-bisphosphate + H(+)</text>
        <dbReference type="Rhea" id="RHEA:12068"/>
        <dbReference type="Rhea" id="RHEA-COMP:9685"/>
        <dbReference type="Rhea" id="RHEA-COMP:9690"/>
        <dbReference type="ChEBI" id="CHEBI:15378"/>
        <dbReference type="ChEBI" id="CHEBI:29999"/>
        <dbReference type="ChEBI" id="CHEBI:57287"/>
        <dbReference type="ChEBI" id="CHEBI:58343"/>
        <dbReference type="ChEBI" id="CHEBI:64479"/>
        <dbReference type="EC" id="2.7.8.7"/>
    </reaction>
</comment>
<comment type="cofactor">
    <cofactor evidence="1">
        <name>Mg(2+)</name>
        <dbReference type="ChEBI" id="CHEBI:18420"/>
    </cofactor>
</comment>
<comment type="subcellular location">
    <subcellularLocation>
        <location evidence="1">Cytoplasm</location>
    </subcellularLocation>
</comment>
<comment type="similarity">
    <text evidence="1">Belongs to the P-Pant transferase superfamily. AcpS family.</text>
</comment>
<name>ACPS_EXIS2</name>
<accession>B1YF32</accession>
<gene>
    <name evidence="1" type="primary">acpS</name>
    <name type="ordered locus">Exig_2810</name>
</gene>
<reference key="1">
    <citation type="submission" date="2008-04" db="EMBL/GenBank/DDBJ databases">
        <title>Complete sequence of chromosome of Exiguobacterium sibiricum 255-15.</title>
        <authorList>
            <consortium name="US DOE Joint Genome Institute"/>
            <person name="Copeland A."/>
            <person name="Lucas S."/>
            <person name="Lapidus A."/>
            <person name="Glavina del Rio T."/>
            <person name="Dalin E."/>
            <person name="Tice H."/>
            <person name="Bruce D."/>
            <person name="Goodwin L."/>
            <person name="Pitluck S."/>
            <person name="Kiss H."/>
            <person name="Chertkov O."/>
            <person name="Monk C."/>
            <person name="Brettin T."/>
            <person name="Detter J.C."/>
            <person name="Han C."/>
            <person name="Kuske C.R."/>
            <person name="Schmutz J."/>
            <person name="Larimer F."/>
            <person name="Land M."/>
            <person name="Hauser L."/>
            <person name="Kyrpides N."/>
            <person name="Mikhailova N."/>
            <person name="Vishnivetskaya T."/>
            <person name="Rodrigues D.F."/>
            <person name="Gilichinsky D."/>
            <person name="Tiedje J."/>
            <person name="Richardson P."/>
        </authorList>
    </citation>
    <scope>NUCLEOTIDE SEQUENCE [LARGE SCALE GENOMIC DNA]</scope>
    <source>
        <strain>DSM 17290 / CCUG 55495 / CIP 109462 / JCM 13490 / 255-15</strain>
    </source>
</reference>
<feature type="chain" id="PRO_1000093876" description="Holo-[acyl-carrier-protein] synthase">
    <location>
        <begin position="1"/>
        <end position="128"/>
    </location>
</feature>
<feature type="binding site" evidence="1">
    <location>
        <position position="8"/>
    </location>
    <ligand>
        <name>Mg(2+)</name>
        <dbReference type="ChEBI" id="CHEBI:18420"/>
    </ligand>
</feature>
<feature type="binding site" evidence="1">
    <location>
        <position position="58"/>
    </location>
    <ligand>
        <name>Mg(2+)</name>
        <dbReference type="ChEBI" id="CHEBI:18420"/>
    </ligand>
</feature>
<sequence length="128" mass="14378">MIFGIGLDLVELEQIRQTLERQPRIVKRVLTAEEQNRFYTLSDKRQLEYLAGRFAAKEAFVKAFGTGIGADVSWLDLEVLNEASGRPVMTGPFEGTIHLSITHSDHYAAAQVLLEKRSSDVSTNLDRN</sequence>
<proteinExistence type="inferred from homology"/>